<name>RL31_SYNJB</name>
<gene>
    <name evidence="1" type="primary">rpmE</name>
    <name evidence="1" type="synonym">rpl31</name>
    <name type="ordered locus">CYB_1585</name>
</gene>
<proteinExistence type="inferred from homology"/>
<feature type="chain" id="PRO_0000259236" description="Large ribosomal subunit protein bL31">
    <location>
        <begin position="1"/>
        <end position="74"/>
    </location>
</feature>
<keyword id="KW-1185">Reference proteome</keyword>
<keyword id="KW-0687">Ribonucleoprotein</keyword>
<keyword id="KW-0689">Ribosomal protein</keyword>
<keyword id="KW-0694">RNA-binding</keyword>
<keyword id="KW-0699">rRNA-binding</keyword>
<dbReference type="EMBL" id="CP000240">
    <property type="protein sequence ID" value="ABD02549.1"/>
    <property type="molecule type" value="Genomic_DNA"/>
</dbReference>
<dbReference type="RefSeq" id="WP_011433195.1">
    <property type="nucleotide sequence ID" value="NC_007776.1"/>
</dbReference>
<dbReference type="STRING" id="321332.CYB_1585"/>
<dbReference type="KEGG" id="cyb:CYB_1585"/>
<dbReference type="eggNOG" id="COG0254">
    <property type="taxonomic scope" value="Bacteria"/>
</dbReference>
<dbReference type="HOGENOM" id="CLU_114306_1_2_3"/>
<dbReference type="OrthoDB" id="9803251at2"/>
<dbReference type="Proteomes" id="UP000001938">
    <property type="component" value="Chromosome"/>
</dbReference>
<dbReference type="GO" id="GO:1990904">
    <property type="term" value="C:ribonucleoprotein complex"/>
    <property type="evidence" value="ECO:0007669"/>
    <property type="project" value="UniProtKB-KW"/>
</dbReference>
<dbReference type="GO" id="GO:0005840">
    <property type="term" value="C:ribosome"/>
    <property type="evidence" value="ECO:0007669"/>
    <property type="project" value="UniProtKB-KW"/>
</dbReference>
<dbReference type="GO" id="GO:0019843">
    <property type="term" value="F:rRNA binding"/>
    <property type="evidence" value="ECO:0007669"/>
    <property type="project" value="UniProtKB-KW"/>
</dbReference>
<dbReference type="GO" id="GO:0003735">
    <property type="term" value="F:structural constituent of ribosome"/>
    <property type="evidence" value="ECO:0007669"/>
    <property type="project" value="InterPro"/>
</dbReference>
<dbReference type="GO" id="GO:0006412">
    <property type="term" value="P:translation"/>
    <property type="evidence" value="ECO:0007669"/>
    <property type="project" value="UniProtKB-UniRule"/>
</dbReference>
<dbReference type="Gene3D" id="4.10.830.30">
    <property type="entry name" value="Ribosomal protein L31"/>
    <property type="match status" value="1"/>
</dbReference>
<dbReference type="HAMAP" id="MF_00501">
    <property type="entry name" value="Ribosomal_bL31_1"/>
    <property type="match status" value="1"/>
</dbReference>
<dbReference type="InterPro" id="IPR034704">
    <property type="entry name" value="Ribosomal_bL28/bL31-like_sf"/>
</dbReference>
<dbReference type="InterPro" id="IPR002150">
    <property type="entry name" value="Ribosomal_bL31"/>
</dbReference>
<dbReference type="InterPro" id="IPR027491">
    <property type="entry name" value="Ribosomal_bL31_A"/>
</dbReference>
<dbReference type="InterPro" id="IPR042105">
    <property type="entry name" value="Ribosomal_bL31_sf"/>
</dbReference>
<dbReference type="NCBIfam" id="TIGR00105">
    <property type="entry name" value="L31"/>
    <property type="match status" value="1"/>
</dbReference>
<dbReference type="NCBIfam" id="NF001809">
    <property type="entry name" value="PRK00528.1"/>
    <property type="match status" value="1"/>
</dbReference>
<dbReference type="PANTHER" id="PTHR33280">
    <property type="entry name" value="50S RIBOSOMAL PROTEIN L31, CHLOROPLASTIC"/>
    <property type="match status" value="1"/>
</dbReference>
<dbReference type="PANTHER" id="PTHR33280:SF1">
    <property type="entry name" value="LARGE RIBOSOMAL SUBUNIT PROTEIN BL31C"/>
    <property type="match status" value="1"/>
</dbReference>
<dbReference type="Pfam" id="PF01197">
    <property type="entry name" value="Ribosomal_L31"/>
    <property type="match status" value="1"/>
</dbReference>
<dbReference type="PRINTS" id="PR01249">
    <property type="entry name" value="RIBOSOMALL31"/>
</dbReference>
<dbReference type="SUPFAM" id="SSF143800">
    <property type="entry name" value="L28p-like"/>
    <property type="match status" value="1"/>
</dbReference>
<dbReference type="PROSITE" id="PS01143">
    <property type="entry name" value="RIBOSOMAL_L31"/>
    <property type="match status" value="1"/>
</dbReference>
<reference key="1">
    <citation type="journal article" date="2007" name="ISME J.">
        <title>Population level functional diversity in a microbial community revealed by comparative genomic and metagenomic analyses.</title>
        <authorList>
            <person name="Bhaya D."/>
            <person name="Grossman A.R."/>
            <person name="Steunou A.-S."/>
            <person name="Khuri N."/>
            <person name="Cohan F.M."/>
            <person name="Hamamura N."/>
            <person name="Melendrez M.C."/>
            <person name="Bateson M.M."/>
            <person name="Ward D.M."/>
            <person name="Heidelberg J.F."/>
        </authorList>
    </citation>
    <scope>NUCLEOTIDE SEQUENCE [LARGE SCALE GENOMIC DNA]</scope>
    <source>
        <strain>JA-2-3B'a(2-13)</strain>
    </source>
</reference>
<organism>
    <name type="scientific">Synechococcus sp. (strain JA-2-3B'a(2-13))</name>
    <name type="common">Cyanobacteria bacterium Yellowstone B-Prime</name>
    <dbReference type="NCBI Taxonomy" id="321332"/>
    <lineage>
        <taxon>Bacteria</taxon>
        <taxon>Bacillati</taxon>
        <taxon>Cyanobacteriota</taxon>
        <taxon>Cyanophyceae</taxon>
        <taxon>Synechococcales</taxon>
        <taxon>Synechococcaceae</taxon>
        <taxon>Synechococcus</taxon>
    </lineage>
</organism>
<protein>
    <recommendedName>
        <fullName evidence="1">Large ribosomal subunit protein bL31</fullName>
    </recommendedName>
    <alternativeName>
        <fullName evidence="2">50S ribosomal protein L31</fullName>
    </alternativeName>
</protein>
<accession>Q2JL69</accession>
<evidence type="ECO:0000255" key="1">
    <source>
        <dbReference type="HAMAP-Rule" id="MF_00501"/>
    </source>
</evidence>
<evidence type="ECO:0000305" key="2"/>
<sequence length="74" mass="8283">MPKKGLHPQWYPEAKVICNGEVVMTVGSTKPELKVDVWSGNHPFFTGSQKIIDSEGRVEKFMRKYGMSGGKKAK</sequence>
<comment type="function">
    <text evidence="1">Binds the 23S rRNA.</text>
</comment>
<comment type="subunit">
    <text evidence="1">Part of the 50S ribosomal subunit.</text>
</comment>
<comment type="similarity">
    <text evidence="1">Belongs to the bacterial ribosomal protein bL31 family. Type A subfamily.</text>
</comment>